<accession>A1E9J1</accession>
<name>PSAA_HORVU</name>
<dbReference type="EC" id="1.97.1.12" evidence="1"/>
<dbReference type="EMBL" id="EF115541">
    <property type="protein sequence ID" value="ABK79413.1"/>
    <property type="molecule type" value="Genomic_DNA"/>
</dbReference>
<dbReference type="RefSeq" id="YP_010144425.1">
    <property type="nucleotide sequence ID" value="NC_056985.1"/>
</dbReference>
<dbReference type="RefSeq" id="YP_874653.1">
    <property type="nucleotide sequence ID" value="NC_008590.1"/>
</dbReference>
<dbReference type="PDB" id="7EW6">
    <property type="method" value="EM"/>
    <property type="resolution" value="3.40 A"/>
    <property type="chains" value="A=1-750"/>
</dbReference>
<dbReference type="PDB" id="7EWK">
    <property type="method" value="EM"/>
    <property type="resolution" value="3.88 A"/>
    <property type="chains" value="A=9-750"/>
</dbReference>
<dbReference type="PDBsum" id="7EW6"/>
<dbReference type="PDBsum" id="7EWK"/>
<dbReference type="SMR" id="A1E9J1"/>
<dbReference type="GeneID" id="4525132"/>
<dbReference type="GeneID" id="67140646"/>
<dbReference type="GO" id="GO:0009535">
    <property type="term" value="C:chloroplast thylakoid membrane"/>
    <property type="evidence" value="ECO:0007669"/>
    <property type="project" value="UniProtKB-SubCell"/>
</dbReference>
<dbReference type="GO" id="GO:0009522">
    <property type="term" value="C:photosystem I"/>
    <property type="evidence" value="ECO:0007669"/>
    <property type="project" value="UniProtKB-KW"/>
</dbReference>
<dbReference type="GO" id="GO:0051539">
    <property type="term" value="F:4 iron, 4 sulfur cluster binding"/>
    <property type="evidence" value="ECO:0007669"/>
    <property type="project" value="UniProtKB-KW"/>
</dbReference>
<dbReference type="GO" id="GO:0016168">
    <property type="term" value="F:chlorophyll binding"/>
    <property type="evidence" value="ECO:0007669"/>
    <property type="project" value="UniProtKB-KW"/>
</dbReference>
<dbReference type="GO" id="GO:0009055">
    <property type="term" value="F:electron transfer activity"/>
    <property type="evidence" value="ECO:0007669"/>
    <property type="project" value="UniProtKB-UniRule"/>
</dbReference>
<dbReference type="GO" id="GO:0000287">
    <property type="term" value="F:magnesium ion binding"/>
    <property type="evidence" value="ECO:0007669"/>
    <property type="project" value="UniProtKB-UniRule"/>
</dbReference>
<dbReference type="GO" id="GO:0016491">
    <property type="term" value="F:oxidoreductase activity"/>
    <property type="evidence" value="ECO:0007669"/>
    <property type="project" value="UniProtKB-KW"/>
</dbReference>
<dbReference type="GO" id="GO:0015979">
    <property type="term" value="P:photosynthesis"/>
    <property type="evidence" value="ECO:0007669"/>
    <property type="project" value="UniProtKB-UniRule"/>
</dbReference>
<dbReference type="FunFam" id="1.20.1130.10:FF:000001">
    <property type="entry name" value="Photosystem I P700 chlorophyll a apoprotein A2"/>
    <property type="match status" value="1"/>
</dbReference>
<dbReference type="Gene3D" id="1.20.1130.10">
    <property type="entry name" value="Photosystem I PsaA/PsaB"/>
    <property type="match status" value="1"/>
</dbReference>
<dbReference type="HAMAP" id="MF_00458">
    <property type="entry name" value="PSI_PsaA"/>
    <property type="match status" value="1"/>
</dbReference>
<dbReference type="InterPro" id="IPR006243">
    <property type="entry name" value="PSI_PsaA"/>
</dbReference>
<dbReference type="InterPro" id="IPR001280">
    <property type="entry name" value="PSI_PsaA/B"/>
</dbReference>
<dbReference type="InterPro" id="IPR020586">
    <property type="entry name" value="PSI_PsaA/B_CS"/>
</dbReference>
<dbReference type="InterPro" id="IPR036408">
    <property type="entry name" value="PSI_PsaA/B_sf"/>
</dbReference>
<dbReference type="NCBIfam" id="TIGR01335">
    <property type="entry name" value="psaA"/>
    <property type="match status" value="1"/>
</dbReference>
<dbReference type="PANTHER" id="PTHR30128">
    <property type="entry name" value="OUTER MEMBRANE PROTEIN, OMPA-RELATED"/>
    <property type="match status" value="1"/>
</dbReference>
<dbReference type="PANTHER" id="PTHR30128:SF19">
    <property type="entry name" value="PHOTOSYSTEM I P700 CHLOROPHYLL A APOPROTEIN A1-RELATED"/>
    <property type="match status" value="1"/>
</dbReference>
<dbReference type="Pfam" id="PF00223">
    <property type="entry name" value="PsaA_PsaB"/>
    <property type="match status" value="1"/>
</dbReference>
<dbReference type="PIRSF" id="PIRSF002905">
    <property type="entry name" value="PSI_A"/>
    <property type="match status" value="1"/>
</dbReference>
<dbReference type="PRINTS" id="PR00257">
    <property type="entry name" value="PHOTSYSPSAAB"/>
</dbReference>
<dbReference type="SUPFAM" id="SSF81558">
    <property type="entry name" value="Photosystem I subunits PsaA/PsaB"/>
    <property type="match status" value="1"/>
</dbReference>
<dbReference type="PROSITE" id="PS00419">
    <property type="entry name" value="PHOTOSYSTEM_I_PSAAB"/>
    <property type="match status" value="1"/>
</dbReference>
<comment type="function">
    <text>PsaA and PsaB bind P700, the primary electron donor of photosystem I (PSI), as well as the electron acceptors A0, A1 and FX. PSI is a plastocyanin-ferredoxin oxidoreductase, converting photonic excitation into a charge separation, which transfers an electron from the donor P700 chlorophyll pair to the spectroscopically characterized acceptors A0, A1, FX, FA and FB in turn. Oxidized P700 is reduced on the lumenal side of the thylakoid membrane by plastocyanin.</text>
</comment>
<comment type="catalytic activity">
    <reaction evidence="1">
        <text>reduced [plastocyanin] + hnu + oxidized [2Fe-2S]-[ferredoxin] = oxidized [plastocyanin] + reduced [2Fe-2S]-[ferredoxin]</text>
        <dbReference type="Rhea" id="RHEA:30407"/>
        <dbReference type="Rhea" id="RHEA-COMP:10000"/>
        <dbReference type="Rhea" id="RHEA-COMP:10001"/>
        <dbReference type="Rhea" id="RHEA-COMP:10039"/>
        <dbReference type="Rhea" id="RHEA-COMP:10040"/>
        <dbReference type="ChEBI" id="CHEBI:29036"/>
        <dbReference type="ChEBI" id="CHEBI:30212"/>
        <dbReference type="ChEBI" id="CHEBI:33737"/>
        <dbReference type="ChEBI" id="CHEBI:33738"/>
        <dbReference type="ChEBI" id="CHEBI:49552"/>
        <dbReference type="EC" id="1.97.1.12"/>
    </reaction>
</comment>
<comment type="cofactor">
    <text evidence="1">P700 is a chlorophyll a/chlorophyll a' dimer, A0 is one or more chlorophyll a, A1 is one or both phylloquinones and FX is a shared 4Fe-4S iron-sulfur center.</text>
</comment>
<comment type="subunit">
    <text evidence="1">The PsaA/B heterodimer binds the P700 chlorophyll special pair and subsequent electron acceptors. PSI consists of a core antenna complex that captures photons, and an electron transfer chain that converts photonic excitation into a charge separation. The eukaryotic PSI reaction center is composed of at least 11 subunits.</text>
</comment>
<comment type="subcellular location">
    <subcellularLocation>
        <location evidence="1">Plastid</location>
        <location evidence="1">Chloroplast thylakoid membrane</location>
        <topology evidence="1">Multi-pass membrane protein</topology>
    </subcellularLocation>
</comment>
<comment type="similarity">
    <text evidence="1">Belongs to the PsaA/PsaB family.</text>
</comment>
<geneLocation type="chloroplast"/>
<protein>
    <recommendedName>
        <fullName evidence="1">Photosystem I P700 chlorophyll a apoprotein A1</fullName>
        <ecNumber evidence="1">1.97.1.12</ecNumber>
    </recommendedName>
    <alternativeName>
        <fullName evidence="1">PSI-A</fullName>
    </alternativeName>
    <alternativeName>
        <fullName evidence="1">PsaA</fullName>
    </alternativeName>
</protein>
<reference key="1">
    <citation type="journal article" date="2007" name="Theor. Appl. Genet.">
        <title>Complete chloroplast genome sequences of Hordeum vulgare, Sorghum bicolor and Agrostis stolonifera, and comparative analyses with other grass genomes.</title>
        <authorList>
            <person name="Saski C."/>
            <person name="Lee S.-B."/>
            <person name="Fjellheim S."/>
            <person name="Guda C."/>
            <person name="Jansen R.K."/>
            <person name="Luo H."/>
            <person name="Tomkins J."/>
            <person name="Rognli O.A."/>
            <person name="Daniell H."/>
            <person name="Clarke J.L."/>
        </authorList>
    </citation>
    <scope>NUCLEOTIDE SEQUENCE [LARGE SCALE GENOMIC DNA]</scope>
    <source>
        <strain>cv. Morex</strain>
    </source>
</reference>
<gene>
    <name evidence="1" type="primary">psaA</name>
</gene>
<sequence>MIIRSPEPEVKIVVDRDPVKTSFEEWARPGHFSRTLAKGPDTTTWIWNLHADAHDFDSHTGDLEEISRKVFSAHFGQLSIIFLWLSGMYFHGARFSNYEAWLSDPTHIGPSAQVVWPIVGQEILNGDVGGGFRGIQITSGFFQLWRASGITSELQLYCTAIGALVFAALMLFAGWFHYHKAAPKLAWFQDVESMLNHHLAGLLGLGSLSWAGHQIHVSLPINQFLDAGVDPKEIPLPHEFILNRDLLAQLYPSFAEGATPFFTLNWSKYAEFLTFRGGLDPVTGGLWLTDIAHHHLAIAILFLIAGHMYRTNWGIGHGLKDILEAHKGPFTGQGHKGLYEILTTSWHAQLSLNLAMLGSTTIVVAHHMYSMPPYPYLATDYGTQLSLFTHHMWIGGFLIVGAAAHAAIFMVRDYDPTTRYNDLLDRVLRHRDAIISHLNWVCIFLGFHSFGLYIHNDTMSALGRPQDMFSDTAIQLQPIFAQWVQNIHATAPGVTAPGATTSTSLTWGGGELVAVGGKVALLPIPLGTADFLVHHIHAFTIHVTVLILLKGVLFARSSRLIPDKANLGFRFPCDGPGRGGTCQVSAWDHVFLGLFWMYNAISVVIFHFSWKMQSDVWGTISDQGVVTHITGGNFAQSSITINGWLRDFLWAQASQVIQSYGSSLSAYGLFFLGAHFVWAFSLMFLFSGRGYWQELIESIVWAHNKLKVAPATQPRALSIIQGRAVGVTHYLLGGIATTWAFFLARIIAVG</sequence>
<organism>
    <name type="scientific">Hordeum vulgare</name>
    <name type="common">Barley</name>
    <dbReference type="NCBI Taxonomy" id="4513"/>
    <lineage>
        <taxon>Eukaryota</taxon>
        <taxon>Viridiplantae</taxon>
        <taxon>Streptophyta</taxon>
        <taxon>Embryophyta</taxon>
        <taxon>Tracheophyta</taxon>
        <taxon>Spermatophyta</taxon>
        <taxon>Magnoliopsida</taxon>
        <taxon>Liliopsida</taxon>
        <taxon>Poales</taxon>
        <taxon>Poaceae</taxon>
        <taxon>BOP clade</taxon>
        <taxon>Pooideae</taxon>
        <taxon>Triticodae</taxon>
        <taxon>Triticeae</taxon>
        <taxon>Hordeinae</taxon>
        <taxon>Hordeum</taxon>
    </lineage>
</organism>
<proteinExistence type="evidence at protein level"/>
<feature type="chain" id="PRO_0000294222" description="Photosystem I P700 chlorophyll a apoprotein A1">
    <location>
        <begin position="1"/>
        <end position="750"/>
    </location>
</feature>
<feature type="transmembrane region" description="Helical; Name=I" evidence="1">
    <location>
        <begin position="70"/>
        <end position="93"/>
    </location>
</feature>
<feature type="transmembrane region" description="Helical; Name=II" evidence="1">
    <location>
        <begin position="156"/>
        <end position="179"/>
    </location>
</feature>
<feature type="transmembrane region" description="Helical; Name=III" evidence="1">
    <location>
        <begin position="195"/>
        <end position="219"/>
    </location>
</feature>
<feature type="transmembrane region" description="Helical; Name=IV" evidence="1">
    <location>
        <begin position="291"/>
        <end position="309"/>
    </location>
</feature>
<feature type="transmembrane region" description="Helical; Name=V" evidence="1">
    <location>
        <begin position="346"/>
        <end position="369"/>
    </location>
</feature>
<feature type="transmembrane region" description="Helical; Name=VI" evidence="1">
    <location>
        <begin position="385"/>
        <end position="411"/>
    </location>
</feature>
<feature type="transmembrane region" description="Helical; Name=VII" evidence="1">
    <location>
        <begin position="433"/>
        <end position="455"/>
    </location>
</feature>
<feature type="transmembrane region" description="Helical; Name=VIII" evidence="1">
    <location>
        <begin position="531"/>
        <end position="549"/>
    </location>
</feature>
<feature type="transmembrane region" description="Helical; Name=IX" evidence="1">
    <location>
        <begin position="589"/>
        <end position="610"/>
    </location>
</feature>
<feature type="transmembrane region" description="Helical; Name=X" evidence="1">
    <location>
        <begin position="664"/>
        <end position="686"/>
    </location>
</feature>
<feature type="transmembrane region" description="Helical; Name=XI" evidence="1">
    <location>
        <begin position="724"/>
        <end position="744"/>
    </location>
</feature>
<feature type="binding site" evidence="1">
    <location>
        <position position="573"/>
    </location>
    <ligand>
        <name>[4Fe-4S] cluster</name>
        <dbReference type="ChEBI" id="CHEBI:49883"/>
        <note>ligand shared between dimeric partners</note>
    </ligand>
</feature>
<feature type="binding site" evidence="1">
    <location>
        <position position="582"/>
    </location>
    <ligand>
        <name>[4Fe-4S] cluster</name>
        <dbReference type="ChEBI" id="CHEBI:49883"/>
        <note>ligand shared between dimeric partners</note>
    </ligand>
</feature>
<feature type="binding site" description="axial binding residue" evidence="1">
    <location>
        <position position="675"/>
    </location>
    <ligand>
        <name>chlorophyll a'</name>
        <dbReference type="ChEBI" id="CHEBI:189419"/>
        <label>A1</label>
    </ligand>
    <ligandPart>
        <name>Mg</name>
        <dbReference type="ChEBI" id="CHEBI:25107"/>
    </ligandPart>
</feature>
<feature type="binding site" description="axial binding residue" evidence="1">
    <location>
        <position position="683"/>
    </location>
    <ligand>
        <name>chlorophyll a</name>
        <dbReference type="ChEBI" id="CHEBI:58416"/>
        <label>A3</label>
    </ligand>
    <ligandPart>
        <name>Mg</name>
        <dbReference type="ChEBI" id="CHEBI:25107"/>
    </ligandPart>
</feature>
<feature type="binding site" evidence="1">
    <location>
        <position position="691"/>
    </location>
    <ligand>
        <name>chlorophyll a</name>
        <dbReference type="ChEBI" id="CHEBI:58416"/>
        <label>A3</label>
    </ligand>
</feature>
<feature type="binding site" evidence="1">
    <location>
        <position position="692"/>
    </location>
    <ligand>
        <name>phylloquinone</name>
        <dbReference type="ChEBI" id="CHEBI:18067"/>
        <label>A</label>
    </ligand>
</feature>
<feature type="helix" evidence="2">
    <location>
        <begin position="24"/>
        <end position="27"/>
    </location>
</feature>
<feature type="helix" evidence="2">
    <location>
        <begin position="36"/>
        <end position="38"/>
    </location>
</feature>
<feature type="helix" evidence="2">
    <location>
        <begin position="43"/>
        <end position="51"/>
    </location>
</feature>
<feature type="helix" evidence="2">
    <location>
        <begin position="56"/>
        <end position="59"/>
    </location>
</feature>
<feature type="helix" evidence="2">
    <location>
        <begin position="63"/>
        <end position="94"/>
    </location>
</feature>
<feature type="helix" evidence="2">
    <location>
        <begin position="98"/>
        <end position="101"/>
    </location>
</feature>
<feature type="strand" evidence="2">
    <location>
        <begin position="118"/>
        <end position="120"/>
    </location>
</feature>
<feature type="helix" evidence="2">
    <location>
        <begin position="121"/>
        <end position="124"/>
    </location>
</feature>
<feature type="strand" evidence="2">
    <location>
        <begin position="125"/>
        <end position="129"/>
    </location>
</feature>
<feature type="strand" evidence="2">
    <location>
        <begin position="132"/>
        <end position="134"/>
    </location>
</feature>
<feature type="helix" evidence="2">
    <location>
        <begin position="141"/>
        <end position="147"/>
    </location>
</feature>
<feature type="helix" evidence="2">
    <location>
        <begin position="153"/>
        <end position="179"/>
    </location>
</feature>
<feature type="helix" evidence="2">
    <location>
        <begin position="185"/>
        <end position="189"/>
    </location>
</feature>
<feature type="helix" evidence="2">
    <location>
        <begin position="191"/>
        <end position="200"/>
    </location>
</feature>
<feature type="helix" evidence="2">
    <location>
        <begin position="203"/>
        <end position="216"/>
    </location>
</feature>
<feature type="helix" evidence="2">
    <location>
        <begin position="218"/>
        <end position="227"/>
    </location>
</feature>
<feature type="helix" evidence="2">
    <location>
        <begin position="231"/>
        <end position="233"/>
    </location>
</feature>
<feature type="helix" evidence="2">
    <location>
        <begin position="237"/>
        <end position="240"/>
    </location>
</feature>
<feature type="helix" evidence="2">
    <location>
        <begin position="244"/>
        <end position="250"/>
    </location>
</feature>
<feature type="helix" evidence="2">
    <location>
        <begin position="252"/>
        <end position="254"/>
    </location>
</feature>
<feature type="helix" evidence="2">
    <location>
        <begin position="260"/>
        <end position="262"/>
    </location>
</feature>
<feature type="helix" evidence="2">
    <location>
        <begin position="266"/>
        <end position="271"/>
    </location>
</feature>
<feature type="turn" evidence="2">
    <location>
        <begin position="281"/>
        <end position="283"/>
    </location>
</feature>
<feature type="helix" evidence="2">
    <location>
        <begin position="288"/>
        <end position="306"/>
    </location>
</feature>
<feature type="strand" evidence="2">
    <location>
        <begin position="312"/>
        <end position="314"/>
    </location>
</feature>
<feature type="helix" evidence="2">
    <location>
        <begin position="319"/>
        <end position="323"/>
    </location>
</feature>
<feature type="turn" evidence="2">
    <location>
        <begin position="329"/>
        <end position="337"/>
    </location>
</feature>
<feature type="helix" evidence="2">
    <location>
        <begin position="338"/>
        <end position="341"/>
    </location>
</feature>
<feature type="helix" evidence="2">
    <location>
        <begin position="346"/>
        <end position="367"/>
    </location>
</feature>
<feature type="turn" evidence="2">
    <location>
        <begin position="368"/>
        <end position="370"/>
    </location>
</feature>
<feature type="helix" evidence="2">
    <location>
        <begin position="381"/>
        <end position="411"/>
    </location>
</feature>
<feature type="turn" evidence="2">
    <location>
        <begin position="416"/>
        <end position="418"/>
    </location>
</feature>
<feature type="helix" evidence="2">
    <location>
        <begin position="423"/>
        <end position="429"/>
    </location>
</feature>
<feature type="helix" evidence="2">
    <location>
        <begin position="431"/>
        <end position="461"/>
    </location>
</feature>
<feature type="strand" evidence="2">
    <location>
        <begin position="467"/>
        <end position="470"/>
    </location>
</feature>
<feature type="helix" evidence="2">
    <location>
        <begin position="479"/>
        <end position="490"/>
    </location>
</feature>
<feature type="turn" evidence="2">
    <location>
        <begin position="491"/>
        <end position="495"/>
    </location>
</feature>
<feature type="strand" evidence="2">
    <location>
        <begin position="507"/>
        <end position="510"/>
    </location>
</feature>
<feature type="strand" evidence="2">
    <location>
        <begin position="514"/>
        <end position="519"/>
    </location>
</feature>
<feature type="helix" evidence="2">
    <location>
        <begin position="528"/>
        <end position="553"/>
    </location>
</feature>
<feature type="helix" evidence="2">
    <location>
        <begin position="564"/>
        <end position="567"/>
    </location>
</feature>
<feature type="helix" evidence="2">
    <location>
        <begin position="586"/>
        <end position="615"/>
    </location>
</feature>
<feature type="strand" evidence="2">
    <location>
        <begin position="618"/>
        <end position="620"/>
    </location>
</feature>
<feature type="strand" evidence="2">
    <location>
        <begin position="622"/>
        <end position="624"/>
    </location>
</feature>
<feature type="helix" evidence="2">
    <location>
        <begin position="634"/>
        <end position="637"/>
    </location>
</feature>
<feature type="helix" evidence="2">
    <location>
        <begin position="641"/>
        <end position="646"/>
    </location>
</feature>
<feature type="helix" evidence="2">
    <location>
        <begin position="649"/>
        <end position="652"/>
    </location>
</feature>
<feature type="helix" evidence="2">
    <location>
        <begin position="654"/>
        <end position="657"/>
    </location>
</feature>
<feature type="helix" evidence="2">
    <location>
        <begin position="665"/>
        <end position="686"/>
    </location>
</feature>
<feature type="helix" evidence="2">
    <location>
        <begin position="689"/>
        <end position="705"/>
    </location>
</feature>
<feature type="strand" evidence="2">
    <location>
        <begin position="711"/>
        <end position="713"/>
    </location>
</feature>
<feature type="helix" evidence="2">
    <location>
        <begin position="719"/>
        <end position="749"/>
    </location>
</feature>
<keyword id="KW-0002">3D-structure</keyword>
<keyword id="KW-0004">4Fe-4S</keyword>
<keyword id="KW-0148">Chlorophyll</keyword>
<keyword id="KW-0150">Chloroplast</keyword>
<keyword id="KW-0157">Chromophore</keyword>
<keyword id="KW-0249">Electron transport</keyword>
<keyword id="KW-0408">Iron</keyword>
<keyword id="KW-0411">Iron-sulfur</keyword>
<keyword id="KW-0460">Magnesium</keyword>
<keyword id="KW-0472">Membrane</keyword>
<keyword id="KW-0479">Metal-binding</keyword>
<keyword id="KW-0560">Oxidoreductase</keyword>
<keyword id="KW-0602">Photosynthesis</keyword>
<keyword id="KW-0603">Photosystem I</keyword>
<keyword id="KW-0934">Plastid</keyword>
<keyword id="KW-0793">Thylakoid</keyword>
<keyword id="KW-0812">Transmembrane</keyword>
<keyword id="KW-1133">Transmembrane helix</keyword>
<keyword id="KW-0813">Transport</keyword>
<evidence type="ECO:0000255" key="1">
    <source>
        <dbReference type="HAMAP-Rule" id="MF_00458"/>
    </source>
</evidence>
<evidence type="ECO:0007829" key="2">
    <source>
        <dbReference type="PDB" id="7EW6"/>
    </source>
</evidence>